<feature type="chain" id="PRO_1000115767" description="1-deoxy-D-xylulose-5-phosphate synthase">
    <location>
        <begin position="1"/>
        <end position="620"/>
    </location>
</feature>
<feature type="binding site" evidence="1">
    <location>
        <position position="80"/>
    </location>
    <ligand>
        <name>thiamine diphosphate</name>
        <dbReference type="ChEBI" id="CHEBI:58937"/>
    </ligand>
</feature>
<feature type="binding site" evidence="1">
    <location>
        <begin position="121"/>
        <end position="123"/>
    </location>
    <ligand>
        <name>thiamine diphosphate</name>
        <dbReference type="ChEBI" id="CHEBI:58937"/>
    </ligand>
</feature>
<feature type="binding site" evidence="1">
    <location>
        <position position="152"/>
    </location>
    <ligand>
        <name>Mg(2+)</name>
        <dbReference type="ChEBI" id="CHEBI:18420"/>
    </ligand>
</feature>
<feature type="binding site" evidence="1">
    <location>
        <begin position="153"/>
        <end position="154"/>
    </location>
    <ligand>
        <name>thiamine diphosphate</name>
        <dbReference type="ChEBI" id="CHEBI:58937"/>
    </ligand>
</feature>
<feature type="binding site" evidence="1">
    <location>
        <position position="181"/>
    </location>
    <ligand>
        <name>Mg(2+)</name>
        <dbReference type="ChEBI" id="CHEBI:18420"/>
    </ligand>
</feature>
<feature type="binding site" evidence="1">
    <location>
        <position position="181"/>
    </location>
    <ligand>
        <name>thiamine diphosphate</name>
        <dbReference type="ChEBI" id="CHEBI:58937"/>
    </ligand>
</feature>
<feature type="binding site" evidence="1">
    <location>
        <position position="288"/>
    </location>
    <ligand>
        <name>thiamine diphosphate</name>
        <dbReference type="ChEBI" id="CHEBI:58937"/>
    </ligand>
</feature>
<feature type="binding site" evidence="1">
    <location>
        <position position="370"/>
    </location>
    <ligand>
        <name>thiamine diphosphate</name>
        <dbReference type="ChEBI" id="CHEBI:58937"/>
    </ligand>
</feature>
<protein>
    <recommendedName>
        <fullName evidence="1">1-deoxy-D-xylulose-5-phosphate synthase</fullName>
        <ecNumber evidence="1">2.2.1.7</ecNumber>
    </recommendedName>
    <alternativeName>
        <fullName evidence="1">1-deoxyxylulose-5-phosphate synthase</fullName>
        <shortName evidence="1">DXP synthase</shortName>
        <shortName evidence="1">DXPS</shortName>
    </alternativeName>
</protein>
<accession>B5R6S3</accession>
<comment type="function">
    <text evidence="1">Catalyzes the acyloin condensation reaction between C atoms 2 and 3 of pyruvate and glyceraldehyde 3-phosphate to yield 1-deoxy-D-xylulose-5-phosphate (DXP).</text>
</comment>
<comment type="catalytic activity">
    <reaction evidence="1">
        <text>D-glyceraldehyde 3-phosphate + pyruvate + H(+) = 1-deoxy-D-xylulose 5-phosphate + CO2</text>
        <dbReference type="Rhea" id="RHEA:12605"/>
        <dbReference type="ChEBI" id="CHEBI:15361"/>
        <dbReference type="ChEBI" id="CHEBI:15378"/>
        <dbReference type="ChEBI" id="CHEBI:16526"/>
        <dbReference type="ChEBI" id="CHEBI:57792"/>
        <dbReference type="ChEBI" id="CHEBI:59776"/>
        <dbReference type="EC" id="2.2.1.7"/>
    </reaction>
</comment>
<comment type="cofactor">
    <cofactor evidence="1">
        <name>Mg(2+)</name>
        <dbReference type="ChEBI" id="CHEBI:18420"/>
    </cofactor>
    <text evidence="1">Binds 1 Mg(2+) ion per subunit.</text>
</comment>
<comment type="cofactor">
    <cofactor evidence="1">
        <name>thiamine diphosphate</name>
        <dbReference type="ChEBI" id="CHEBI:58937"/>
    </cofactor>
    <text evidence="1">Binds 1 thiamine pyrophosphate per subunit.</text>
</comment>
<comment type="pathway">
    <text evidence="1">Metabolic intermediate biosynthesis; 1-deoxy-D-xylulose 5-phosphate biosynthesis; 1-deoxy-D-xylulose 5-phosphate from D-glyceraldehyde 3-phosphate and pyruvate: step 1/1.</text>
</comment>
<comment type="subunit">
    <text evidence="1">Homodimer.</text>
</comment>
<comment type="similarity">
    <text evidence="1">Belongs to the transketolase family. DXPS subfamily.</text>
</comment>
<keyword id="KW-0414">Isoprene biosynthesis</keyword>
<keyword id="KW-0460">Magnesium</keyword>
<keyword id="KW-0479">Metal-binding</keyword>
<keyword id="KW-0784">Thiamine biosynthesis</keyword>
<keyword id="KW-0786">Thiamine pyrophosphate</keyword>
<keyword id="KW-0808">Transferase</keyword>
<name>DXS_SALG2</name>
<organism>
    <name type="scientific">Salmonella gallinarum (strain 287/91 / NCTC 13346)</name>
    <dbReference type="NCBI Taxonomy" id="550538"/>
    <lineage>
        <taxon>Bacteria</taxon>
        <taxon>Pseudomonadati</taxon>
        <taxon>Pseudomonadota</taxon>
        <taxon>Gammaproteobacteria</taxon>
        <taxon>Enterobacterales</taxon>
        <taxon>Enterobacteriaceae</taxon>
        <taxon>Salmonella</taxon>
    </lineage>
</organism>
<sequence>MSFDIAKYPTLALVDSTQELRLLPKESLPKLCDELRRYLLDSVSRSSGHFASGLGTVELTVALHYVYNTPFDQLIWDVGHQAYPHKILTGRRDKIGTIRQKGGLHPFPWRGESEYDVLSVGHSSTSISAGIGIAVAAEKEGKDRRTVCVIGDGAITAGMAFEAMNHAGDIRPDMLVILNDNEMSISENVGALNNHLAQLLSGKLYSSLREGGKKVFSGVPPIKELLKRTEEHIKGMVVPGTLFEELGFNYIGPVDGHDVMGLISTLKNMRDLKGPQFLHIMTKKGRGYEPAEKDPITFHAVPKFDPSSGCLPKSSGGLPGYSKIFGDWLCETAAKDSKLMAITPAMREGSGMVEFSRKFPDRYFDVAIAEQHAVTFAAGLAIGGYKPVVAIYSTFLQRAYDQVIHDVAIQKLPVMFAIDRAGIVGADGQTHQGAFDLSYLRCIPDMVIMTPSDENECRQMLFTGYHYNDGPTAVRYPRGNAQGVALTPLEKLPIGKGLVKRHGEKLAILNFGTLMPEAAKVAEALNATLVDMRFVKPLDDTLILEMAAQHDALVTLEENAIMGGAGSGVNEVLMAHRKPVPVLNIGLPDFFIPQGTQEEARAELGLDAAGIEAKIKAWLA</sequence>
<proteinExistence type="inferred from homology"/>
<reference key="1">
    <citation type="journal article" date="2008" name="Genome Res.">
        <title>Comparative genome analysis of Salmonella enteritidis PT4 and Salmonella gallinarum 287/91 provides insights into evolutionary and host adaptation pathways.</title>
        <authorList>
            <person name="Thomson N.R."/>
            <person name="Clayton D.J."/>
            <person name="Windhorst D."/>
            <person name="Vernikos G."/>
            <person name="Davidson S."/>
            <person name="Churcher C."/>
            <person name="Quail M.A."/>
            <person name="Stevens M."/>
            <person name="Jones M.A."/>
            <person name="Watson M."/>
            <person name="Barron A."/>
            <person name="Layton A."/>
            <person name="Pickard D."/>
            <person name="Kingsley R.A."/>
            <person name="Bignell A."/>
            <person name="Clark L."/>
            <person name="Harris B."/>
            <person name="Ormond D."/>
            <person name="Abdellah Z."/>
            <person name="Brooks K."/>
            <person name="Cherevach I."/>
            <person name="Chillingworth T."/>
            <person name="Woodward J."/>
            <person name="Norberczak H."/>
            <person name="Lord A."/>
            <person name="Arrowsmith C."/>
            <person name="Jagels K."/>
            <person name="Moule S."/>
            <person name="Mungall K."/>
            <person name="Saunders M."/>
            <person name="Whitehead S."/>
            <person name="Chabalgoity J.A."/>
            <person name="Maskell D."/>
            <person name="Humphreys T."/>
            <person name="Roberts M."/>
            <person name="Barrow P.A."/>
            <person name="Dougan G."/>
            <person name="Parkhill J."/>
        </authorList>
    </citation>
    <scope>NUCLEOTIDE SEQUENCE [LARGE SCALE GENOMIC DNA]</scope>
    <source>
        <strain>287/91 / NCTC 13346</strain>
    </source>
</reference>
<dbReference type="EC" id="2.2.1.7" evidence="1"/>
<dbReference type="EMBL" id="AM933173">
    <property type="protein sequence ID" value="CAR36332.1"/>
    <property type="molecule type" value="Genomic_DNA"/>
</dbReference>
<dbReference type="RefSeq" id="WP_000006777.1">
    <property type="nucleotide sequence ID" value="NC_011274.1"/>
</dbReference>
<dbReference type="SMR" id="B5R6S3"/>
<dbReference type="KEGG" id="seg:SG0433"/>
<dbReference type="HOGENOM" id="CLU_009227_1_4_6"/>
<dbReference type="UniPathway" id="UPA00064">
    <property type="reaction ID" value="UER00091"/>
</dbReference>
<dbReference type="Proteomes" id="UP000008321">
    <property type="component" value="Chromosome"/>
</dbReference>
<dbReference type="GO" id="GO:0005829">
    <property type="term" value="C:cytosol"/>
    <property type="evidence" value="ECO:0007669"/>
    <property type="project" value="TreeGrafter"/>
</dbReference>
<dbReference type="GO" id="GO:0008661">
    <property type="term" value="F:1-deoxy-D-xylulose-5-phosphate synthase activity"/>
    <property type="evidence" value="ECO:0007669"/>
    <property type="project" value="UniProtKB-UniRule"/>
</dbReference>
<dbReference type="GO" id="GO:0000287">
    <property type="term" value="F:magnesium ion binding"/>
    <property type="evidence" value="ECO:0007669"/>
    <property type="project" value="UniProtKB-UniRule"/>
</dbReference>
<dbReference type="GO" id="GO:0030976">
    <property type="term" value="F:thiamine pyrophosphate binding"/>
    <property type="evidence" value="ECO:0007669"/>
    <property type="project" value="UniProtKB-UniRule"/>
</dbReference>
<dbReference type="GO" id="GO:0052865">
    <property type="term" value="P:1-deoxy-D-xylulose 5-phosphate biosynthetic process"/>
    <property type="evidence" value="ECO:0007669"/>
    <property type="project" value="UniProtKB-UniPathway"/>
</dbReference>
<dbReference type="GO" id="GO:0019288">
    <property type="term" value="P:isopentenyl diphosphate biosynthetic process, methylerythritol 4-phosphate pathway"/>
    <property type="evidence" value="ECO:0007669"/>
    <property type="project" value="TreeGrafter"/>
</dbReference>
<dbReference type="GO" id="GO:0016114">
    <property type="term" value="P:terpenoid biosynthetic process"/>
    <property type="evidence" value="ECO:0007669"/>
    <property type="project" value="UniProtKB-UniRule"/>
</dbReference>
<dbReference type="GO" id="GO:0009228">
    <property type="term" value="P:thiamine biosynthetic process"/>
    <property type="evidence" value="ECO:0007669"/>
    <property type="project" value="UniProtKB-UniRule"/>
</dbReference>
<dbReference type="CDD" id="cd02007">
    <property type="entry name" value="TPP_DXS"/>
    <property type="match status" value="1"/>
</dbReference>
<dbReference type="CDD" id="cd07033">
    <property type="entry name" value="TPP_PYR_DXS_TK_like"/>
    <property type="match status" value="1"/>
</dbReference>
<dbReference type="FunFam" id="3.40.50.920:FF:000002">
    <property type="entry name" value="1-deoxy-D-xylulose-5-phosphate synthase"/>
    <property type="match status" value="1"/>
</dbReference>
<dbReference type="FunFam" id="3.40.50.970:FF:000005">
    <property type="entry name" value="1-deoxy-D-xylulose-5-phosphate synthase"/>
    <property type="match status" value="1"/>
</dbReference>
<dbReference type="Gene3D" id="3.40.50.920">
    <property type="match status" value="1"/>
</dbReference>
<dbReference type="Gene3D" id="3.40.50.970">
    <property type="match status" value="2"/>
</dbReference>
<dbReference type="HAMAP" id="MF_00315">
    <property type="entry name" value="DXP_synth"/>
    <property type="match status" value="1"/>
</dbReference>
<dbReference type="InterPro" id="IPR005477">
    <property type="entry name" value="Dxylulose-5-P_synthase"/>
</dbReference>
<dbReference type="InterPro" id="IPR029061">
    <property type="entry name" value="THDP-binding"/>
</dbReference>
<dbReference type="InterPro" id="IPR009014">
    <property type="entry name" value="Transketo_C/PFOR_II"/>
</dbReference>
<dbReference type="InterPro" id="IPR005475">
    <property type="entry name" value="Transketolase-like_Pyr-bd"/>
</dbReference>
<dbReference type="InterPro" id="IPR020826">
    <property type="entry name" value="Transketolase_BS"/>
</dbReference>
<dbReference type="InterPro" id="IPR033248">
    <property type="entry name" value="Transketolase_C"/>
</dbReference>
<dbReference type="InterPro" id="IPR049557">
    <property type="entry name" value="Transketolase_CS"/>
</dbReference>
<dbReference type="NCBIfam" id="TIGR00204">
    <property type="entry name" value="dxs"/>
    <property type="match status" value="1"/>
</dbReference>
<dbReference type="NCBIfam" id="NF003933">
    <property type="entry name" value="PRK05444.2-2"/>
    <property type="match status" value="1"/>
</dbReference>
<dbReference type="PANTHER" id="PTHR43322">
    <property type="entry name" value="1-D-DEOXYXYLULOSE 5-PHOSPHATE SYNTHASE-RELATED"/>
    <property type="match status" value="1"/>
</dbReference>
<dbReference type="PANTHER" id="PTHR43322:SF5">
    <property type="entry name" value="1-DEOXY-D-XYLULOSE-5-PHOSPHATE SYNTHASE, CHLOROPLASTIC"/>
    <property type="match status" value="1"/>
</dbReference>
<dbReference type="Pfam" id="PF13292">
    <property type="entry name" value="DXP_synthase_N"/>
    <property type="match status" value="1"/>
</dbReference>
<dbReference type="Pfam" id="PF02779">
    <property type="entry name" value="Transket_pyr"/>
    <property type="match status" value="1"/>
</dbReference>
<dbReference type="Pfam" id="PF02780">
    <property type="entry name" value="Transketolase_C"/>
    <property type="match status" value="1"/>
</dbReference>
<dbReference type="SMART" id="SM00861">
    <property type="entry name" value="Transket_pyr"/>
    <property type="match status" value="1"/>
</dbReference>
<dbReference type="SUPFAM" id="SSF52518">
    <property type="entry name" value="Thiamin diphosphate-binding fold (THDP-binding)"/>
    <property type="match status" value="2"/>
</dbReference>
<dbReference type="SUPFAM" id="SSF52922">
    <property type="entry name" value="TK C-terminal domain-like"/>
    <property type="match status" value="1"/>
</dbReference>
<dbReference type="PROSITE" id="PS00801">
    <property type="entry name" value="TRANSKETOLASE_1"/>
    <property type="match status" value="1"/>
</dbReference>
<dbReference type="PROSITE" id="PS00802">
    <property type="entry name" value="TRANSKETOLASE_2"/>
    <property type="match status" value="1"/>
</dbReference>
<evidence type="ECO:0000255" key="1">
    <source>
        <dbReference type="HAMAP-Rule" id="MF_00315"/>
    </source>
</evidence>
<gene>
    <name evidence="1" type="primary">dxs</name>
    <name type="ordered locus">SG0433</name>
</gene>